<name>Y1686_STAAW</name>
<protein>
    <recommendedName>
        <fullName evidence="1">UPF0354 protein MW1686</fullName>
    </recommendedName>
</protein>
<comment type="similarity">
    <text evidence="1">Belongs to the UPF0354 family.</text>
</comment>
<reference key="1">
    <citation type="journal article" date="2002" name="Lancet">
        <title>Genome and virulence determinants of high virulence community-acquired MRSA.</title>
        <authorList>
            <person name="Baba T."/>
            <person name="Takeuchi F."/>
            <person name="Kuroda M."/>
            <person name="Yuzawa H."/>
            <person name="Aoki K."/>
            <person name="Oguchi A."/>
            <person name="Nagai Y."/>
            <person name="Iwama N."/>
            <person name="Asano K."/>
            <person name="Naimi T."/>
            <person name="Kuroda H."/>
            <person name="Cui L."/>
            <person name="Yamamoto K."/>
            <person name="Hiramatsu K."/>
        </authorList>
    </citation>
    <scope>NUCLEOTIDE SEQUENCE [LARGE SCALE GENOMIC DNA]</scope>
    <source>
        <strain>MW2</strain>
    </source>
</reference>
<sequence>MNTFQMRDKLKERLSHLDVDFKFNREEETLRIYRTDNNKGITIKLNAIVAKYEDKKEKIVDEIVYYVDEAIAQMADKTLESISSSQIMPVIRATSFDKKTKQGVPFIYDEHTAETAVYYAVDLGKSYRLIDESMLEDLKLTEQQIREMSLFNVRKLSNSYTTDEVKGNTFYFINSNDGYDASRILNTAFLNEIEAQCQGEMLVAVPHQDVLIIADIRNKTGYDVMAHLTMEFFTKGLVPITSLSFGYKQGHLEPIFILGKNNKQKRDPNVIQRLEANRRKFNKDK</sequence>
<proteinExistence type="inferred from homology"/>
<feature type="chain" id="PRO_0000171111" description="UPF0354 protein MW1686">
    <location>
        <begin position="1"/>
        <end position="285"/>
    </location>
</feature>
<dbReference type="EMBL" id="BA000033">
    <property type="protein sequence ID" value="BAB95551.1"/>
    <property type="molecule type" value="Genomic_DNA"/>
</dbReference>
<dbReference type="RefSeq" id="WP_001091389.1">
    <property type="nucleotide sequence ID" value="NC_003923.1"/>
</dbReference>
<dbReference type="KEGG" id="sam:MW1686"/>
<dbReference type="HOGENOM" id="CLU_085634_0_0_9"/>
<dbReference type="HAMAP" id="MF_01548">
    <property type="entry name" value="UPF0354"/>
    <property type="match status" value="1"/>
</dbReference>
<dbReference type="InterPro" id="IPR010838">
    <property type="entry name" value="DUF1444"/>
</dbReference>
<dbReference type="NCBIfam" id="NF010189">
    <property type="entry name" value="PRK13668.1"/>
    <property type="match status" value="1"/>
</dbReference>
<dbReference type="Pfam" id="PF07285">
    <property type="entry name" value="DUF1444"/>
    <property type="match status" value="1"/>
</dbReference>
<dbReference type="PIRSF" id="PIRSF012562">
    <property type="entry name" value="UCP012562"/>
    <property type="match status" value="1"/>
</dbReference>
<organism>
    <name type="scientific">Staphylococcus aureus (strain MW2)</name>
    <dbReference type="NCBI Taxonomy" id="196620"/>
    <lineage>
        <taxon>Bacteria</taxon>
        <taxon>Bacillati</taxon>
        <taxon>Bacillota</taxon>
        <taxon>Bacilli</taxon>
        <taxon>Bacillales</taxon>
        <taxon>Staphylococcaceae</taxon>
        <taxon>Staphylococcus</taxon>
    </lineage>
</organism>
<gene>
    <name type="ordered locus">MW1686</name>
</gene>
<accession>Q8NW30</accession>
<evidence type="ECO:0000255" key="1">
    <source>
        <dbReference type="HAMAP-Rule" id="MF_01548"/>
    </source>
</evidence>